<feature type="chain" id="PRO_0000112486" description="N-acetyl-gamma-glutamyl-phosphate reductase">
    <location>
        <begin position="1"/>
        <end position="341"/>
    </location>
</feature>
<feature type="active site" evidence="1">
    <location>
        <position position="149"/>
    </location>
</feature>
<organism>
    <name type="scientific">Methanocaldococcus jannaschii (strain ATCC 43067 / DSM 2661 / JAL-1 / JCM 10045 / NBRC 100440)</name>
    <name type="common">Methanococcus jannaschii</name>
    <dbReference type="NCBI Taxonomy" id="243232"/>
    <lineage>
        <taxon>Archaea</taxon>
        <taxon>Methanobacteriati</taxon>
        <taxon>Methanobacteriota</taxon>
        <taxon>Methanomada group</taxon>
        <taxon>Methanococci</taxon>
        <taxon>Methanococcales</taxon>
        <taxon>Methanocaldococcaceae</taxon>
        <taxon>Methanocaldococcus</taxon>
    </lineage>
</organism>
<gene>
    <name evidence="1" type="primary">argC</name>
    <name type="ordered locus">MJ1096</name>
</gene>
<protein>
    <recommendedName>
        <fullName evidence="1">N-acetyl-gamma-glutamyl-phosphate reductase</fullName>
        <shortName evidence="1">AGPR</shortName>
        <ecNumber evidence="1">1.2.1.38</ecNumber>
    </recommendedName>
    <alternativeName>
        <fullName evidence="1">N-acetyl-glutamate semialdehyde dehydrogenase</fullName>
        <shortName evidence="1">NAGSA dehydrogenase</shortName>
    </alternativeName>
</protein>
<dbReference type="EC" id="1.2.1.38" evidence="1"/>
<dbReference type="EMBL" id="L77117">
    <property type="protein sequence ID" value="AAB99099.1"/>
    <property type="status" value="ALT_INIT"/>
    <property type="molecule type" value="Genomic_DNA"/>
</dbReference>
<dbReference type="PIR" id="G64436">
    <property type="entry name" value="G64436"/>
</dbReference>
<dbReference type="RefSeq" id="WP_010870608.1">
    <property type="nucleotide sequence ID" value="NC_000909.1"/>
</dbReference>
<dbReference type="SMR" id="Q58496"/>
<dbReference type="FunCoup" id="Q58496">
    <property type="interactions" value="97"/>
</dbReference>
<dbReference type="STRING" id="243232.MJ_1096"/>
<dbReference type="PaxDb" id="243232-MJ_1096"/>
<dbReference type="EnsemblBacteria" id="AAB99099">
    <property type="protein sequence ID" value="AAB99099"/>
    <property type="gene ID" value="MJ_1096"/>
</dbReference>
<dbReference type="GeneID" id="1451992"/>
<dbReference type="KEGG" id="mja:MJ_1096"/>
<dbReference type="eggNOG" id="arCOG00495">
    <property type="taxonomic scope" value="Archaea"/>
</dbReference>
<dbReference type="HOGENOM" id="CLU_006384_0_1_2"/>
<dbReference type="InParanoid" id="Q58496"/>
<dbReference type="OrthoDB" id="372053at2157"/>
<dbReference type="PhylomeDB" id="Q58496"/>
<dbReference type="UniPathway" id="UPA00068">
    <property type="reaction ID" value="UER00108"/>
</dbReference>
<dbReference type="Proteomes" id="UP000000805">
    <property type="component" value="Chromosome"/>
</dbReference>
<dbReference type="GO" id="GO:0005737">
    <property type="term" value="C:cytoplasm"/>
    <property type="evidence" value="ECO:0007669"/>
    <property type="project" value="UniProtKB-SubCell"/>
</dbReference>
<dbReference type="GO" id="GO:0003942">
    <property type="term" value="F:N-acetyl-gamma-glutamyl-phosphate reductase activity"/>
    <property type="evidence" value="ECO:0007669"/>
    <property type="project" value="UniProtKB-UniRule"/>
</dbReference>
<dbReference type="GO" id="GO:0051287">
    <property type="term" value="F:NAD binding"/>
    <property type="evidence" value="ECO:0007669"/>
    <property type="project" value="InterPro"/>
</dbReference>
<dbReference type="GO" id="GO:0070401">
    <property type="term" value="F:NADP+ binding"/>
    <property type="evidence" value="ECO:0007669"/>
    <property type="project" value="InterPro"/>
</dbReference>
<dbReference type="GO" id="GO:0006526">
    <property type="term" value="P:L-arginine biosynthetic process"/>
    <property type="evidence" value="ECO:0007669"/>
    <property type="project" value="UniProtKB-UniRule"/>
</dbReference>
<dbReference type="CDD" id="cd23934">
    <property type="entry name" value="AGPR_1_C"/>
    <property type="match status" value="1"/>
</dbReference>
<dbReference type="CDD" id="cd17895">
    <property type="entry name" value="AGPR_1_N"/>
    <property type="match status" value="1"/>
</dbReference>
<dbReference type="FunFam" id="3.30.360.10:FF:000014">
    <property type="entry name" value="N-acetyl-gamma-glutamyl-phosphate reductase"/>
    <property type="match status" value="1"/>
</dbReference>
<dbReference type="Gene3D" id="3.30.360.10">
    <property type="entry name" value="Dihydrodipicolinate Reductase, domain 2"/>
    <property type="match status" value="1"/>
</dbReference>
<dbReference type="Gene3D" id="3.40.50.720">
    <property type="entry name" value="NAD(P)-binding Rossmann-like Domain"/>
    <property type="match status" value="1"/>
</dbReference>
<dbReference type="HAMAP" id="MF_00150">
    <property type="entry name" value="ArgC_type1"/>
    <property type="match status" value="1"/>
</dbReference>
<dbReference type="InterPro" id="IPR023013">
    <property type="entry name" value="AGPR_AS"/>
</dbReference>
<dbReference type="InterPro" id="IPR000706">
    <property type="entry name" value="AGPR_type-1"/>
</dbReference>
<dbReference type="InterPro" id="IPR036291">
    <property type="entry name" value="NAD(P)-bd_dom_sf"/>
</dbReference>
<dbReference type="InterPro" id="IPR050085">
    <property type="entry name" value="NAGSA_dehydrogenase"/>
</dbReference>
<dbReference type="InterPro" id="IPR000534">
    <property type="entry name" value="Semialdehyde_DH_NAD-bd"/>
</dbReference>
<dbReference type="NCBIfam" id="TIGR01850">
    <property type="entry name" value="argC"/>
    <property type="match status" value="1"/>
</dbReference>
<dbReference type="PANTHER" id="PTHR32338:SF10">
    <property type="entry name" value="N-ACETYL-GAMMA-GLUTAMYL-PHOSPHATE REDUCTASE, CHLOROPLASTIC-RELATED"/>
    <property type="match status" value="1"/>
</dbReference>
<dbReference type="PANTHER" id="PTHR32338">
    <property type="entry name" value="N-ACETYL-GAMMA-GLUTAMYL-PHOSPHATE REDUCTASE, CHLOROPLASTIC-RELATED-RELATED"/>
    <property type="match status" value="1"/>
</dbReference>
<dbReference type="Pfam" id="PF01118">
    <property type="entry name" value="Semialdhyde_dh"/>
    <property type="match status" value="1"/>
</dbReference>
<dbReference type="Pfam" id="PF22698">
    <property type="entry name" value="Semialdhyde_dhC_1"/>
    <property type="match status" value="1"/>
</dbReference>
<dbReference type="SMART" id="SM00859">
    <property type="entry name" value="Semialdhyde_dh"/>
    <property type="match status" value="1"/>
</dbReference>
<dbReference type="SUPFAM" id="SSF55347">
    <property type="entry name" value="Glyceraldehyde-3-phosphate dehydrogenase-like, C-terminal domain"/>
    <property type="match status" value="1"/>
</dbReference>
<dbReference type="SUPFAM" id="SSF51735">
    <property type="entry name" value="NAD(P)-binding Rossmann-fold domains"/>
    <property type="match status" value="1"/>
</dbReference>
<dbReference type="PROSITE" id="PS01224">
    <property type="entry name" value="ARGC"/>
    <property type="match status" value="1"/>
</dbReference>
<comment type="function">
    <text evidence="1">Catalyzes the NADPH-dependent reduction of N-acetyl-5-glutamyl phosphate to yield N-acetyl-L-glutamate 5-semialdehyde.</text>
</comment>
<comment type="catalytic activity">
    <reaction evidence="1">
        <text>N-acetyl-L-glutamate 5-semialdehyde + phosphate + NADP(+) = N-acetyl-L-glutamyl 5-phosphate + NADPH + H(+)</text>
        <dbReference type="Rhea" id="RHEA:21588"/>
        <dbReference type="ChEBI" id="CHEBI:15378"/>
        <dbReference type="ChEBI" id="CHEBI:29123"/>
        <dbReference type="ChEBI" id="CHEBI:43474"/>
        <dbReference type="ChEBI" id="CHEBI:57783"/>
        <dbReference type="ChEBI" id="CHEBI:57936"/>
        <dbReference type="ChEBI" id="CHEBI:58349"/>
        <dbReference type="EC" id="1.2.1.38"/>
    </reaction>
</comment>
<comment type="pathway">
    <text evidence="1">Amino-acid biosynthesis; L-arginine biosynthesis; N(2)-acetyl-L-ornithine from L-glutamate: step 3/4.</text>
</comment>
<comment type="subcellular location">
    <subcellularLocation>
        <location evidence="1">Cytoplasm</location>
    </subcellularLocation>
</comment>
<comment type="similarity">
    <text evidence="1">Belongs to the NAGSA dehydrogenase family. Type 1 subfamily.</text>
</comment>
<comment type="sequence caution" evidence="2">
    <conflict type="erroneous initiation">
        <sequence resource="EMBL-CDS" id="AAB99099"/>
    </conflict>
</comment>
<evidence type="ECO:0000255" key="1">
    <source>
        <dbReference type="HAMAP-Rule" id="MF_00150"/>
    </source>
</evidence>
<evidence type="ECO:0000305" key="2"/>
<reference key="1">
    <citation type="journal article" date="1996" name="Science">
        <title>Complete genome sequence of the methanogenic archaeon, Methanococcus jannaschii.</title>
        <authorList>
            <person name="Bult C.J."/>
            <person name="White O."/>
            <person name="Olsen G.J."/>
            <person name="Zhou L."/>
            <person name="Fleischmann R.D."/>
            <person name="Sutton G.G."/>
            <person name="Blake J.A."/>
            <person name="FitzGerald L.M."/>
            <person name="Clayton R.A."/>
            <person name="Gocayne J.D."/>
            <person name="Kerlavage A.R."/>
            <person name="Dougherty B.A."/>
            <person name="Tomb J.-F."/>
            <person name="Adams M.D."/>
            <person name="Reich C.I."/>
            <person name="Overbeek R."/>
            <person name="Kirkness E.F."/>
            <person name="Weinstock K.G."/>
            <person name="Merrick J.M."/>
            <person name="Glodek A."/>
            <person name="Scott J.L."/>
            <person name="Geoghagen N.S.M."/>
            <person name="Weidman J.F."/>
            <person name="Fuhrmann J.L."/>
            <person name="Nguyen D."/>
            <person name="Utterback T.R."/>
            <person name="Kelley J.M."/>
            <person name="Peterson J.D."/>
            <person name="Sadow P.W."/>
            <person name="Hanna M.C."/>
            <person name="Cotton M.D."/>
            <person name="Roberts K.M."/>
            <person name="Hurst M.A."/>
            <person name="Kaine B.P."/>
            <person name="Borodovsky M."/>
            <person name="Klenk H.-P."/>
            <person name="Fraser C.M."/>
            <person name="Smith H.O."/>
            <person name="Woese C.R."/>
            <person name="Venter J.C."/>
        </authorList>
    </citation>
    <scope>NUCLEOTIDE SEQUENCE [LARGE SCALE GENOMIC DNA]</scope>
    <source>
        <strain>ATCC 43067 / DSM 2661 / JAL-1 / JCM 10045 / NBRC 100440</strain>
    </source>
</reference>
<sequence length="341" mass="38172">MKEVAIIGATGYTGAELLRLLANHEKVNVTYITSRKEAGKHVFKVHPHLKGIEKYKNLCFTGDIDKVDAYLVFTATPHGASMDIVPDFIERGMKVIDLSGDYRFEDLSLYEKYYKIKHKGLPDVKIAYGLPELHREEIKEAQLVANPGCFPTGAILAVAPLVKENIIEERIIFDSKTGVSGAGIKPTETTHFPNVNENINPYKITTHRHTPEIEKELKKLGKAKVSFTPHLAPITRGILTTAHTFLAKDVDREEIIKIYEKFYGSEVFVRIFSEEIPKLTWVRGTNFCDIGGFEIDEHGRLVVISAIDNLVKGASGQAIQNMNIMFGFDEKEGLFDVGLNP</sequence>
<name>ARGC_METJA</name>
<accession>Q58496</accession>
<proteinExistence type="inferred from homology"/>
<keyword id="KW-0028">Amino-acid biosynthesis</keyword>
<keyword id="KW-0055">Arginine biosynthesis</keyword>
<keyword id="KW-0963">Cytoplasm</keyword>
<keyword id="KW-0521">NADP</keyword>
<keyword id="KW-0560">Oxidoreductase</keyword>
<keyword id="KW-1185">Reference proteome</keyword>